<proteinExistence type="evidence at protein level"/>
<keyword id="KW-1003">Cell membrane</keyword>
<keyword id="KW-0903">Direct protein sequencing</keyword>
<keyword id="KW-0375">Hydrogen ion transport</keyword>
<keyword id="KW-0406">Ion transport</keyword>
<keyword id="KW-0472">Membrane</keyword>
<keyword id="KW-1185">Reference proteome</keyword>
<keyword id="KW-0812">Transmembrane</keyword>
<keyword id="KW-1133">Transmembrane helix</keyword>
<keyword id="KW-0813">Transport</keyword>
<feature type="chain" id="PRO_0000119229" description="A-type ATP synthase subunit I">
    <location>
        <begin position="1"/>
        <end position="692"/>
    </location>
</feature>
<feature type="transmembrane region" description="Helical" evidence="1">
    <location>
        <begin position="389"/>
        <end position="409"/>
    </location>
</feature>
<feature type="transmembrane region" description="Helical" evidence="1">
    <location>
        <begin position="422"/>
        <end position="442"/>
    </location>
</feature>
<feature type="transmembrane region" description="Helical" evidence="1">
    <location>
        <begin position="494"/>
        <end position="514"/>
    </location>
</feature>
<feature type="transmembrane region" description="Helical" evidence="1">
    <location>
        <begin position="531"/>
        <end position="551"/>
    </location>
</feature>
<feature type="transmembrane region" description="Helical" evidence="1">
    <location>
        <begin position="553"/>
        <end position="573"/>
    </location>
</feature>
<feature type="transmembrane region" description="Helical" evidence="1">
    <location>
        <begin position="602"/>
        <end position="622"/>
    </location>
</feature>
<feature type="transmembrane region" description="Helical" evidence="1">
    <location>
        <begin position="624"/>
        <end position="644"/>
    </location>
</feature>
<reference key="1">
    <citation type="journal article" date="1996" name="Science">
        <title>Complete genome sequence of the methanogenic archaeon, Methanococcus jannaschii.</title>
        <authorList>
            <person name="Bult C.J."/>
            <person name="White O."/>
            <person name="Olsen G.J."/>
            <person name="Zhou L."/>
            <person name="Fleischmann R.D."/>
            <person name="Sutton G.G."/>
            <person name="Blake J.A."/>
            <person name="FitzGerald L.M."/>
            <person name="Clayton R.A."/>
            <person name="Gocayne J.D."/>
            <person name="Kerlavage A.R."/>
            <person name="Dougherty B.A."/>
            <person name="Tomb J.-F."/>
            <person name="Adams M.D."/>
            <person name="Reich C.I."/>
            <person name="Overbeek R."/>
            <person name="Kirkness E.F."/>
            <person name="Weinstock K.G."/>
            <person name="Merrick J.M."/>
            <person name="Glodek A."/>
            <person name="Scott J.L."/>
            <person name="Geoghagen N.S.M."/>
            <person name="Weidman J.F."/>
            <person name="Fuhrmann J.L."/>
            <person name="Nguyen D."/>
            <person name="Utterback T.R."/>
            <person name="Kelley J.M."/>
            <person name="Peterson J.D."/>
            <person name="Sadow P.W."/>
            <person name="Hanna M.C."/>
            <person name="Cotton M.D."/>
            <person name="Roberts K.M."/>
            <person name="Hurst M.A."/>
            <person name="Kaine B.P."/>
            <person name="Borodovsky M."/>
            <person name="Klenk H.-P."/>
            <person name="Fraser C.M."/>
            <person name="Smith H.O."/>
            <person name="Woese C.R."/>
            <person name="Venter J.C."/>
        </authorList>
    </citation>
    <scope>NUCLEOTIDE SEQUENCE [LARGE SCALE GENOMIC DNA]</scope>
    <source>
        <strain>ATCC 43067 / DSM 2661 / JAL-1 / JCM 10045 / NBRC 100440</strain>
    </source>
</reference>
<reference key="2">
    <citation type="journal article" date="2003" name="Extremophiles">
        <title>Isolation of a complete A1AO ATP synthase comprising nine subunits from the hyperthermophile Methanococcus jannaschii.</title>
        <authorList>
            <person name="Lingl A."/>
            <person name="Huber H."/>
            <person name="Stetter K.O."/>
            <person name="Mayer F."/>
            <person name="Kellermann J."/>
            <person name="Mueller V."/>
        </authorList>
    </citation>
    <scope>PROTEIN SEQUENCE OF 1-9</scope>
    <scope>FUNCTION</scope>
    <scope>BIOPHYSICOCHEMICAL PROPERTIES</scope>
    <scope>SUBUNIT</scope>
    <scope>SUBCELLULAR LOCATION</scope>
    <scope>DOMAIN</scope>
    <source>
        <strain>ATCC 43067 / DSM 2661 / JAL-1 / JCM 10045 / NBRC 100440</strain>
    </source>
</reference>
<reference key="3">
    <citation type="journal article" date="2004" name="J. Biol. Chem.">
        <title>Structure and subunit arrangement of the A-type ATP synthase complex from the archaeon Methanococcus jannaschii visualized by electron microscopy.</title>
        <authorList>
            <person name="Coskun U."/>
            <person name="Chaban Y.L."/>
            <person name="Lingl A."/>
            <person name="Mueller V."/>
            <person name="Keegstra W."/>
            <person name="Boekema E.J."/>
            <person name="Grueber G."/>
        </authorList>
    </citation>
    <scope>STRUCTURE BY ELECTRON MICROSCOPY (18 ANGSTROMS) OF A-TYPE ATP SYNTHASE</scope>
    <scope>SUBUNIT</scope>
    <scope>SUBCELLULAR LOCATION</scope>
    <scope>DOMAIN</scope>
    <source>
        <strain>ATCC 43067 / DSM 2661 / JAL-1 / JCM 10045 / NBRC 100440</strain>
    </source>
</reference>
<gene>
    <name evidence="5" type="primary">atpI</name>
    <name type="ordered locus">MJ0222</name>
</gene>
<comment type="function">
    <text evidence="7">Component of the A-type ATP synthase that produces ATP from ADP in the presence of a proton gradient across the membrane.</text>
</comment>
<comment type="biophysicochemical properties">
    <phDependence>
        <text evidence="2">Optimum pH is 6.0 for ATP hydrolysis.</text>
    </phDependence>
    <temperatureDependence>
        <text evidence="2">Optimum temperature is 80 degrees Celsius.</text>
    </temperatureDependence>
</comment>
<comment type="subunit">
    <text evidence="2 3">The A-type ATPase is composed of subunits A(3), B(3), C, D, E(1 or 2), F, H(2), I and K(x) (PubMed:12768457, PubMed:15220347).</text>
</comment>
<comment type="subcellular location">
    <subcellularLocation>
        <location evidence="2 3">Cell membrane</location>
        <topology evidence="7 8">Multi-pass membrane protein</topology>
    </subcellularLocation>
</comment>
<comment type="domain">
    <text evidence="2 3">Purified ATP synthase is 25.9 nm long. The hydrophilic A1 domain is 9.4 X 11.5 nm, the central stalk is 8.0 X 3.9 nm and the membrane-bound A0 domain is 6.4 X 10.6 nm; the domains are connected by two stalks. ATP is synthesized or hydrolyzed by the A1 domain while ion translocation occurs via the A0 domain.</text>
</comment>
<comment type="similarity">
    <text evidence="6">Belongs to the V-ATPase 116 kDa subunit family.</text>
</comment>
<comment type="sequence caution" evidence="2">
    <conflict type="erroneous initiation">
        <sequence resource="EMBL-CDS" id="AAB98208"/>
    </conflict>
    <text>Extended N-terminus.</text>
</comment>
<protein>
    <recommendedName>
        <fullName evidence="6">A-type ATP synthase subunit I</fullName>
    </recommendedName>
    <alternativeName>
        <fullName evidence="4">A1A0-type ATP synthase subunit I</fullName>
    </alternativeName>
</protein>
<accession>Q57675</accession>
<evidence type="ECO:0000255" key="1"/>
<evidence type="ECO:0000269" key="2">
    <source>
    </source>
</evidence>
<evidence type="ECO:0000269" key="3">
    <source>
    </source>
</evidence>
<evidence type="ECO:0000303" key="4">
    <source>
    </source>
</evidence>
<evidence type="ECO:0000303" key="5">
    <source>
    </source>
</evidence>
<evidence type="ECO:0000305" key="6"/>
<evidence type="ECO:0000305" key="7">
    <source>
    </source>
</evidence>
<evidence type="ECO:0000305" key="8">
    <source>
    </source>
</evidence>
<name>AATI_METJA</name>
<sequence length="692" mass="76629">MRPVRMKKLKAVILDEKIDNVVRSLHEEGIVELCDLSEKLEDLEWKTLLSPSSSADYVRNVTSLMIKAGRILDMFSSVSQKETSIKDILNPKPVEKKKVSFNSYQEVIDYAEKVLNEISKEVDGPAERLSELDNKKSKLLQLKEQISYLKGLEFDLKYLGSGEYVFIGAGSVPKEKLGELKAELDKVADGYIGIFSGSEFEKDKKIRVPIVFVTLKEKLENVLSEIRKFEFERYDISDVEGTPSEALSKIESELKAIESERNSLIEKLKALAQKWEKELLAVYELLSIEKARGDAYSQFGKTDRTYYIEAWVPARDAEKAKSLIENSADGFAFVEITEPDEPEEKIPVLLDNPKVIKPFEMLTEMYALPKYNEVDPTLLLVPGFLLFYGIMLTDAVYGLLLTIIGLFIWKKIGKVSEGANKLGYILTLAGISTVIMGIITGGYLGDFTYEFFGFDVTKTPLALVNPLGESYYINNNNPLFTLGSISVTNGPMAILVFSIFVGLIHLLIGLFVGFKENVKRGNMGDAFINQGVWILLILSIFVGIGLMFAGANTMIAGGIIGIFVVLAILASMYKGYKSGGVMEAILGAMDVTGFLGNVLSYARLLALCLATGGLAMAVNIMAKLVGESIPVIGIIVAIIILLVGHTFNFVMNGLGAFIHSLRLHYVEFFSQFYEGGGKKFSPFKANREYTTA</sequence>
<dbReference type="EMBL" id="L77117">
    <property type="protein sequence ID" value="AAB98208.1"/>
    <property type="status" value="ALT_INIT"/>
    <property type="molecule type" value="Genomic_DNA"/>
</dbReference>
<dbReference type="PIR" id="G64327">
    <property type="entry name" value="G64327"/>
</dbReference>
<dbReference type="SMR" id="Q57675"/>
<dbReference type="FunCoup" id="Q57675">
    <property type="interactions" value="35"/>
</dbReference>
<dbReference type="STRING" id="243232.MJ_0222"/>
<dbReference type="PaxDb" id="243232-MJ_0222"/>
<dbReference type="EnsemblBacteria" id="AAB98208">
    <property type="protein sequence ID" value="AAB98208"/>
    <property type="gene ID" value="MJ_0222"/>
</dbReference>
<dbReference type="KEGG" id="mja:MJ_0222"/>
<dbReference type="eggNOG" id="arCOG04138">
    <property type="taxonomic scope" value="Archaea"/>
</dbReference>
<dbReference type="HOGENOM" id="CLU_025558_1_0_2"/>
<dbReference type="InParanoid" id="Q57675"/>
<dbReference type="OrthoDB" id="85892at2157"/>
<dbReference type="PhylomeDB" id="Q57675"/>
<dbReference type="Proteomes" id="UP000000805">
    <property type="component" value="Chromosome"/>
</dbReference>
<dbReference type="GO" id="GO:0005886">
    <property type="term" value="C:plasma membrane"/>
    <property type="evidence" value="ECO:0007669"/>
    <property type="project" value="UniProtKB-SubCell"/>
</dbReference>
<dbReference type="GO" id="GO:0033179">
    <property type="term" value="C:proton-transporting V-type ATPase, V0 domain"/>
    <property type="evidence" value="ECO:0007669"/>
    <property type="project" value="InterPro"/>
</dbReference>
<dbReference type="GO" id="GO:0016471">
    <property type="term" value="C:vacuolar proton-transporting V-type ATPase complex"/>
    <property type="evidence" value="ECO:0000318"/>
    <property type="project" value="GO_Central"/>
</dbReference>
<dbReference type="GO" id="GO:0051117">
    <property type="term" value="F:ATPase binding"/>
    <property type="evidence" value="ECO:0000318"/>
    <property type="project" value="GO_Central"/>
</dbReference>
<dbReference type="GO" id="GO:0046961">
    <property type="term" value="F:proton-transporting ATPase activity, rotational mechanism"/>
    <property type="evidence" value="ECO:0007669"/>
    <property type="project" value="InterPro"/>
</dbReference>
<dbReference type="GO" id="GO:0007035">
    <property type="term" value="P:vacuolar acidification"/>
    <property type="evidence" value="ECO:0000318"/>
    <property type="project" value="GO_Central"/>
</dbReference>
<dbReference type="Gene3D" id="1.20.1460.20">
    <property type="match status" value="1"/>
</dbReference>
<dbReference type="Gene3D" id="3.30.70.2170">
    <property type="match status" value="1"/>
</dbReference>
<dbReference type="Gene3D" id="3.30.70.2750">
    <property type="match status" value="1"/>
</dbReference>
<dbReference type="InterPro" id="IPR002490">
    <property type="entry name" value="V-ATPase_116kDa_su"/>
</dbReference>
<dbReference type="NCBIfam" id="NF004428">
    <property type="entry name" value="PRK05771.2-1"/>
    <property type="match status" value="1"/>
</dbReference>
<dbReference type="PANTHER" id="PTHR11629:SF63">
    <property type="entry name" value="V-TYPE PROTON ATPASE SUBUNIT A"/>
    <property type="match status" value="1"/>
</dbReference>
<dbReference type="PANTHER" id="PTHR11629">
    <property type="entry name" value="VACUOLAR PROTON ATPASES"/>
    <property type="match status" value="1"/>
</dbReference>
<dbReference type="Pfam" id="PF01496">
    <property type="entry name" value="V_ATPase_I"/>
    <property type="match status" value="2"/>
</dbReference>
<organism>
    <name type="scientific">Methanocaldococcus jannaschii (strain ATCC 43067 / DSM 2661 / JAL-1 / JCM 10045 / NBRC 100440)</name>
    <name type="common">Methanococcus jannaschii</name>
    <dbReference type="NCBI Taxonomy" id="243232"/>
    <lineage>
        <taxon>Archaea</taxon>
        <taxon>Methanobacteriati</taxon>
        <taxon>Methanobacteriota</taxon>
        <taxon>Methanomada group</taxon>
        <taxon>Methanococci</taxon>
        <taxon>Methanococcales</taxon>
        <taxon>Methanocaldococcaceae</taxon>
        <taxon>Methanocaldococcus</taxon>
    </lineage>
</organism>